<comment type="function">
    <text evidence="1">Catalyzes the interconversion of L-alanine and D-alanine. May also act on other amino acids.</text>
</comment>
<comment type="catalytic activity">
    <reaction evidence="1">
        <text>L-alanine = D-alanine</text>
        <dbReference type="Rhea" id="RHEA:20249"/>
        <dbReference type="ChEBI" id="CHEBI:57416"/>
        <dbReference type="ChEBI" id="CHEBI:57972"/>
        <dbReference type="EC" id="5.1.1.1"/>
    </reaction>
</comment>
<comment type="cofactor">
    <cofactor evidence="1">
        <name>pyridoxal 5'-phosphate</name>
        <dbReference type="ChEBI" id="CHEBI:597326"/>
    </cofactor>
</comment>
<comment type="pathway">
    <text evidence="1">Amino-acid biosynthesis; D-alanine biosynthesis; D-alanine from L-alanine: step 1/1.</text>
</comment>
<comment type="similarity">
    <text evidence="1">Belongs to the alanine racemase family.</text>
</comment>
<evidence type="ECO:0000255" key="1">
    <source>
        <dbReference type="HAMAP-Rule" id="MF_01201"/>
    </source>
</evidence>
<name>ALR_BRUSU</name>
<proteinExistence type="inferred from homology"/>
<reference key="1">
    <citation type="journal article" date="2002" name="Proc. Natl. Acad. Sci. U.S.A.">
        <title>The Brucella suis genome reveals fundamental similarities between animal and plant pathogens and symbionts.</title>
        <authorList>
            <person name="Paulsen I.T."/>
            <person name="Seshadri R."/>
            <person name="Nelson K.E."/>
            <person name="Eisen J.A."/>
            <person name="Heidelberg J.F."/>
            <person name="Read T.D."/>
            <person name="Dodson R.J."/>
            <person name="Umayam L.A."/>
            <person name="Brinkac L.M."/>
            <person name="Beanan M.J."/>
            <person name="Daugherty S.C."/>
            <person name="DeBoy R.T."/>
            <person name="Durkin A.S."/>
            <person name="Kolonay J.F."/>
            <person name="Madupu R."/>
            <person name="Nelson W.C."/>
            <person name="Ayodeji B."/>
            <person name="Kraul M."/>
            <person name="Shetty J."/>
            <person name="Malek J.A."/>
            <person name="Van Aken S.E."/>
            <person name="Riedmuller S."/>
            <person name="Tettelin H."/>
            <person name="Gill S.R."/>
            <person name="White O."/>
            <person name="Salzberg S.L."/>
            <person name="Hoover D.L."/>
            <person name="Lindler L.E."/>
            <person name="Halling S.M."/>
            <person name="Boyle S.M."/>
            <person name="Fraser C.M."/>
        </authorList>
    </citation>
    <scope>NUCLEOTIDE SEQUENCE [LARGE SCALE GENOMIC DNA]</scope>
    <source>
        <strain>1330</strain>
    </source>
</reference>
<reference key="2">
    <citation type="journal article" date="2011" name="J. Bacteriol.">
        <title>Revised genome sequence of Brucella suis 1330.</title>
        <authorList>
            <person name="Tae H."/>
            <person name="Shallom S."/>
            <person name="Settlage R."/>
            <person name="Preston D."/>
            <person name="Adams L.G."/>
            <person name="Garner H.R."/>
        </authorList>
    </citation>
    <scope>NUCLEOTIDE SEQUENCE [LARGE SCALE GENOMIC DNA]</scope>
    <source>
        <strain>1330</strain>
    </source>
</reference>
<sequence>MSLPFSQDERDLAAGGILTIDLAALRHNYSAIATRIAPTRTAAVVKADAYGLGASRVAPAFYEAGCRDFFVAHLGEAVALKPFLKPDATLYVLNGLQPGTEAACAREGILPVLNSLEQVENWAALATRLGKKLPALLQFDTGMSRLGLSAKEFDRLLENVTLLSRIDIKFAISHLANGDEPGNAANARQLAKMTALLARLPKLPAALANSGGTFLGKTYYFDLARPGIALYGIDPERQHDFSDKVAHENKKPKHSILPVLTLSARVIQVRDVDKGATVGYGGTYVANGPMRIATIAVGYADGLFRSLSNKGAAFFGDTRLPIIGRVSMDSITLDVTSLPEGTLKLGSLVELIGPHQRLEDVARDCDTIPYEILTALGNRYARVYVYVNGGGTSTTA</sequence>
<protein>
    <recommendedName>
        <fullName evidence="1">Alanine racemase</fullName>
        <ecNumber evidence="1">5.1.1.1</ecNumber>
    </recommendedName>
</protein>
<keyword id="KW-0413">Isomerase</keyword>
<keyword id="KW-0663">Pyridoxal phosphate</keyword>
<gene>
    <name type="primary">alr</name>
    <name type="ordered locus">BRA0923</name>
    <name type="ordered locus">BS1330_II0915</name>
</gene>
<organism>
    <name type="scientific">Brucella suis biovar 1 (strain 1330)</name>
    <dbReference type="NCBI Taxonomy" id="204722"/>
    <lineage>
        <taxon>Bacteria</taxon>
        <taxon>Pseudomonadati</taxon>
        <taxon>Pseudomonadota</taxon>
        <taxon>Alphaproteobacteria</taxon>
        <taxon>Hyphomicrobiales</taxon>
        <taxon>Brucellaceae</taxon>
        <taxon>Brucella/Ochrobactrum group</taxon>
        <taxon>Brucella</taxon>
    </lineage>
</organism>
<feature type="chain" id="PRO_0000114504" description="Alanine racemase">
    <location>
        <begin position="1"/>
        <end position="396"/>
    </location>
</feature>
<feature type="active site" description="Proton acceptor; specific for D-alanine" evidence="1">
    <location>
        <position position="46"/>
    </location>
</feature>
<feature type="active site" description="Proton acceptor; specific for L-alanine" evidence="1">
    <location>
        <position position="280"/>
    </location>
</feature>
<feature type="binding site" evidence="1">
    <location>
        <position position="145"/>
    </location>
    <ligand>
        <name>substrate</name>
    </ligand>
</feature>
<feature type="binding site" evidence="1">
    <location>
        <position position="328"/>
    </location>
    <ligand>
        <name>substrate</name>
    </ligand>
</feature>
<feature type="modified residue" description="N6-(pyridoxal phosphate)lysine" evidence="1">
    <location>
        <position position="46"/>
    </location>
</feature>
<dbReference type="EC" id="5.1.1.1" evidence="1"/>
<dbReference type="EMBL" id="AE014292">
    <property type="protein sequence ID" value="AAN34095.1"/>
    <property type="molecule type" value="Genomic_DNA"/>
</dbReference>
<dbReference type="EMBL" id="CP002998">
    <property type="protein sequence ID" value="AEM20371.1"/>
    <property type="molecule type" value="Genomic_DNA"/>
</dbReference>
<dbReference type="SMR" id="Q8FVC1"/>
<dbReference type="KEGG" id="bms:BRA0923"/>
<dbReference type="KEGG" id="bsi:BS1330_II0915"/>
<dbReference type="HOGENOM" id="CLU_028393_1_1_5"/>
<dbReference type="UniPathway" id="UPA00042">
    <property type="reaction ID" value="UER00497"/>
</dbReference>
<dbReference type="Proteomes" id="UP000007104">
    <property type="component" value="Chromosome II"/>
</dbReference>
<dbReference type="GO" id="GO:0005829">
    <property type="term" value="C:cytosol"/>
    <property type="evidence" value="ECO:0007669"/>
    <property type="project" value="TreeGrafter"/>
</dbReference>
<dbReference type="GO" id="GO:0008784">
    <property type="term" value="F:alanine racemase activity"/>
    <property type="evidence" value="ECO:0007669"/>
    <property type="project" value="UniProtKB-UniRule"/>
</dbReference>
<dbReference type="GO" id="GO:0030170">
    <property type="term" value="F:pyridoxal phosphate binding"/>
    <property type="evidence" value="ECO:0007669"/>
    <property type="project" value="UniProtKB-UniRule"/>
</dbReference>
<dbReference type="GO" id="GO:0030632">
    <property type="term" value="P:D-alanine biosynthetic process"/>
    <property type="evidence" value="ECO:0007669"/>
    <property type="project" value="UniProtKB-UniRule"/>
</dbReference>
<dbReference type="CDD" id="cd00430">
    <property type="entry name" value="PLPDE_III_AR"/>
    <property type="match status" value="1"/>
</dbReference>
<dbReference type="Gene3D" id="3.20.20.10">
    <property type="entry name" value="Alanine racemase"/>
    <property type="match status" value="1"/>
</dbReference>
<dbReference type="Gene3D" id="2.40.37.10">
    <property type="entry name" value="Lyase, Ornithine Decarboxylase, Chain A, domain 1"/>
    <property type="match status" value="1"/>
</dbReference>
<dbReference type="HAMAP" id="MF_01201">
    <property type="entry name" value="Ala_racemase"/>
    <property type="match status" value="1"/>
</dbReference>
<dbReference type="InterPro" id="IPR000821">
    <property type="entry name" value="Ala_racemase"/>
</dbReference>
<dbReference type="InterPro" id="IPR009006">
    <property type="entry name" value="Ala_racemase/Decarboxylase_C"/>
</dbReference>
<dbReference type="InterPro" id="IPR011079">
    <property type="entry name" value="Ala_racemase_C"/>
</dbReference>
<dbReference type="InterPro" id="IPR001608">
    <property type="entry name" value="Ala_racemase_N"/>
</dbReference>
<dbReference type="InterPro" id="IPR020622">
    <property type="entry name" value="Ala_racemase_pyridoxalP-BS"/>
</dbReference>
<dbReference type="InterPro" id="IPR029066">
    <property type="entry name" value="PLP-binding_barrel"/>
</dbReference>
<dbReference type="NCBIfam" id="TIGR00492">
    <property type="entry name" value="alr"/>
    <property type="match status" value="1"/>
</dbReference>
<dbReference type="PANTHER" id="PTHR30511">
    <property type="entry name" value="ALANINE RACEMASE"/>
    <property type="match status" value="1"/>
</dbReference>
<dbReference type="PANTHER" id="PTHR30511:SF0">
    <property type="entry name" value="ALANINE RACEMASE, CATABOLIC-RELATED"/>
    <property type="match status" value="1"/>
</dbReference>
<dbReference type="Pfam" id="PF00842">
    <property type="entry name" value="Ala_racemase_C"/>
    <property type="match status" value="1"/>
</dbReference>
<dbReference type="Pfam" id="PF01168">
    <property type="entry name" value="Ala_racemase_N"/>
    <property type="match status" value="1"/>
</dbReference>
<dbReference type="PRINTS" id="PR00992">
    <property type="entry name" value="ALARACEMASE"/>
</dbReference>
<dbReference type="SMART" id="SM01005">
    <property type="entry name" value="Ala_racemase_C"/>
    <property type="match status" value="1"/>
</dbReference>
<dbReference type="SUPFAM" id="SSF50621">
    <property type="entry name" value="Alanine racemase C-terminal domain-like"/>
    <property type="match status" value="1"/>
</dbReference>
<dbReference type="SUPFAM" id="SSF51419">
    <property type="entry name" value="PLP-binding barrel"/>
    <property type="match status" value="1"/>
</dbReference>
<dbReference type="PROSITE" id="PS00395">
    <property type="entry name" value="ALANINE_RACEMASE"/>
    <property type="match status" value="1"/>
</dbReference>
<accession>Q8FVC1</accession>
<accession>G0KDT3</accession>